<organism>
    <name type="scientific">Anaeromyxobacter sp. (strain K)</name>
    <dbReference type="NCBI Taxonomy" id="447217"/>
    <lineage>
        <taxon>Bacteria</taxon>
        <taxon>Pseudomonadati</taxon>
        <taxon>Myxococcota</taxon>
        <taxon>Myxococcia</taxon>
        <taxon>Myxococcales</taxon>
        <taxon>Cystobacterineae</taxon>
        <taxon>Anaeromyxobacteraceae</taxon>
        <taxon>Anaeromyxobacter</taxon>
    </lineage>
</organism>
<comment type="function">
    <text evidence="1">Could be involved in septation.</text>
</comment>
<comment type="similarity">
    <text evidence="1">Belongs to the SpoVG family.</text>
</comment>
<evidence type="ECO:0000255" key="1">
    <source>
        <dbReference type="HAMAP-Rule" id="MF_00819"/>
    </source>
</evidence>
<evidence type="ECO:0000256" key="2">
    <source>
        <dbReference type="SAM" id="MobiDB-lite"/>
    </source>
</evidence>
<sequence>MEITEVRVFPVNEEKLKAYVTITLDHCFVIRDLKVIHGNTGLFIAMPAKRRKDGTFKDIAHPLNSDTREKMERTILAEYDRELKKGGAAPARATGTDPHED</sequence>
<feature type="chain" id="PRO_1000196486" description="Putative septation protein SpoVG">
    <location>
        <begin position="1"/>
        <end position="101"/>
    </location>
</feature>
<feature type="region of interest" description="Disordered" evidence="2">
    <location>
        <begin position="82"/>
        <end position="101"/>
    </location>
</feature>
<protein>
    <recommendedName>
        <fullName evidence="1">Putative septation protein SpoVG</fullName>
    </recommendedName>
</protein>
<proteinExistence type="inferred from homology"/>
<keyword id="KW-0131">Cell cycle</keyword>
<keyword id="KW-0132">Cell division</keyword>
<keyword id="KW-0717">Septation</keyword>
<name>SP5G_ANASK</name>
<gene>
    <name evidence="1" type="primary">spoVG</name>
    <name type="ordered locus">AnaeK_0129</name>
</gene>
<accession>B4ULC5</accession>
<reference key="1">
    <citation type="submission" date="2008-08" db="EMBL/GenBank/DDBJ databases">
        <title>Complete sequence of Anaeromyxobacter sp. K.</title>
        <authorList>
            <consortium name="US DOE Joint Genome Institute"/>
            <person name="Lucas S."/>
            <person name="Copeland A."/>
            <person name="Lapidus A."/>
            <person name="Glavina del Rio T."/>
            <person name="Dalin E."/>
            <person name="Tice H."/>
            <person name="Bruce D."/>
            <person name="Goodwin L."/>
            <person name="Pitluck S."/>
            <person name="Saunders E."/>
            <person name="Brettin T."/>
            <person name="Detter J.C."/>
            <person name="Han C."/>
            <person name="Larimer F."/>
            <person name="Land M."/>
            <person name="Hauser L."/>
            <person name="Kyrpides N."/>
            <person name="Ovchinnikiva G."/>
            <person name="Beliaev A."/>
        </authorList>
    </citation>
    <scope>NUCLEOTIDE SEQUENCE [LARGE SCALE GENOMIC DNA]</scope>
    <source>
        <strain>K</strain>
    </source>
</reference>
<dbReference type="EMBL" id="CP001131">
    <property type="protein sequence ID" value="ACG71372.1"/>
    <property type="molecule type" value="Genomic_DNA"/>
</dbReference>
<dbReference type="RefSeq" id="WP_012524208.1">
    <property type="nucleotide sequence ID" value="NC_011145.1"/>
</dbReference>
<dbReference type="SMR" id="B4ULC5"/>
<dbReference type="KEGG" id="ank:AnaeK_0129"/>
<dbReference type="HOGENOM" id="CLU_103669_2_1_7"/>
<dbReference type="OrthoDB" id="9796286at2"/>
<dbReference type="Proteomes" id="UP000001871">
    <property type="component" value="Chromosome"/>
</dbReference>
<dbReference type="GO" id="GO:0000917">
    <property type="term" value="P:division septum assembly"/>
    <property type="evidence" value="ECO:0007669"/>
    <property type="project" value="UniProtKB-KW"/>
</dbReference>
<dbReference type="GO" id="GO:0030435">
    <property type="term" value="P:sporulation resulting in formation of a cellular spore"/>
    <property type="evidence" value="ECO:0007669"/>
    <property type="project" value="InterPro"/>
</dbReference>
<dbReference type="Gene3D" id="3.30.1120.40">
    <property type="entry name" value="Stage V sporulation protein G"/>
    <property type="match status" value="1"/>
</dbReference>
<dbReference type="HAMAP" id="MF_00819">
    <property type="entry name" value="SpoVG"/>
    <property type="match status" value="1"/>
</dbReference>
<dbReference type="InterPro" id="IPR007170">
    <property type="entry name" value="SpoVG"/>
</dbReference>
<dbReference type="InterPro" id="IPR036751">
    <property type="entry name" value="SpoVG_sf"/>
</dbReference>
<dbReference type="NCBIfam" id="NF009749">
    <property type="entry name" value="PRK13259.1"/>
    <property type="match status" value="1"/>
</dbReference>
<dbReference type="PANTHER" id="PTHR38429">
    <property type="entry name" value="SEPTATION PROTEIN SPOVG-RELATED"/>
    <property type="match status" value="1"/>
</dbReference>
<dbReference type="PANTHER" id="PTHR38429:SF1">
    <property type="entry name" value="SEPTATION PROTEIN SPOVG-RELATED"/>
    <property type="match status" value="1"/>
</dbReference>
<dbReference type="Pfam" id="PF04026">
    <property type="entry name" value="SpoVG"/>
    <property type="match status" value="1"/>
</dbReference>
<dbReference type="SUPFAM" id="SSF160537">
    <property type="entry name" value="SpoVG-like"/>
    <property type="match status" value="1"/>
</dbReference>